<organismHost>
    <name type="scientific">Heliothis</name>
    <dbReference type="NCBI Taxonomy" id="7101"/>
</organismHost>
<comment type="function">
    <text evidence="1">Involved in disruption of the peritrophic membrane and fusion of nucleocapsids with midgut cells.</text>
</comment>
<proteinExistence type="inferred from homology"/>
<evidence type="ECO:0000250" key="1"/>
<evidence type="ECO:0000255" key="2"/>
<evidence type="ECO:0000255" key="3">
    <source>
        <dbReference type="PROSITE-ProRule" id="PRU01060"/>
    </source>
</evidence>
<dbReference type="EMBL" id="D28558">
    <property type="protein sequence ID" value="BAA05908.1"/>
    <property type="molecule type" value="Genomic_DNA"/>
</dbReference>
<dbReference type="MEROPS" id="M60.004"/>
<dbReference type="GlyCosmos" id="P54232">
    <property type="glycosylation" value="10 sites, No reported glycans"/>
</dbReference>
<dbReference type="Gene3D" id="3.40.390.80">
    <property type="entry name" value="Peptidase M60, enhancin-like domain 2"/>
    <property type="match status" value="1"/>
</dbReference>
<dbReference type="InterPro" id="IPR004954">
    <property type="entry name" value="Mucin-bd"/>
</dbReference>
<dbReference type="InterPro" id="IPR031161">
    <property type="entry name" value="Peptidase_M60_dom"/>
</dbReference>
<dbReference type="Pfam" id="PF03272">
    <property type="entry name" value="Mucin_bdg"/>
    <property type="match status" value="1"/>
</dbReference>
<dbReference type="Pfam" id="PF13402">
    <property type="entry name" value="Peptidase_M60"/>
    <property type="match status" value="1"/>
</dbReference>
<dbReference type="SMART" id="SM01276">
    <property type="entry name" value="M60-like"/>
    <property type="match status" value="1"/>
</dbReference>
<dbReference type="PROSITE" id="PS51723">
    <property type="entry name" value="PEPTIDASE_M60"/>
    <property type="match status" value="1"/>
</dbReference>
<organism>
    <name type="scientific">Heliothis armigera granulosis virus</name>
    <name type="common">HaGV</name>
    <name type="synonym">Heliothis armigera granulovirus</name>
    <dbReference type="NCBI Taxonomy" id="45440"/>
    <lineage>
        <taxon>Viruses</taxon>
        <taxon>Viruses incertae sedis</taxon>
        <taxon>Naldaviricetes</taxon>
        <taxon>Lefavirales</taxon>
        <taxon>Baculoviridae</taxon>
        <taxon>Betabaculovirus</taxon>
    </lineage>
</organism>
<sequence>MSYNVIVPTTVLPPWLRIGQNWIFARHRRTEVGVVLPANTKFRVRADFAKWGITRPVIVRLLNNNRNTEREINLTNDQWIEMEHEHECVPFVDWPVGEKNTMAEVHFEIDGPHIPLPVYVFNTRPVENFKSEYRQSSSGYCFLYLDLVCILVPPASKNVLLDTDLFELHQFYNEIINYYDDLCGLVEDPYADTVDSNLPNKAAFVKADGGGPGGAYYGAFWTAPASTNLGEYLRVSPTNWMVIHELGHAYDFVFTVNTRLIEIWNNSFCDRIQYTWMNKTKRQQLARIYENQRPQKEAAIQALIDNNVPFDNWDFFEKLSIFAWLYNPQRGLDTLRNINHSYRLHAARNPVTPYPQIWAWLMSCGYDNFWLYFNRIGLYPADFYINEHNKVVHFNLHMRALALGQSVRYPIKYIITDFDLLQKNYDIKQYLESNFDLVIPEELRQTDLVADVRVVCVIDDPSQIIGEPFSLYDGNERVFESTVATDGNMYLVGVGPGVYTLRAPRGKDKRYKLHLAHSPNEPVHPANDHMYLLVTYPYYNQTLTYTRYITSDLAIDAAHLFGTDRLYVATIYFDALQQTVTVYLNNIRTGRENNTTLYFEMEIHNPFIGTSSKFTLLEDNVTMRQGYYKFPAVTFSSIRLHIRDDNRLMLVDKYLPAGDTLLFMFPNQIVDNNIFPDGSILTSTYNRIKEQAAFIENHKQLLYIENELRDSIYLASQFVNSDSNEFLKYFPDYFRDPHTFSYLFRFRGLGDFMLLELQIVPILNLASVRVGNHHNGPHSYFNTTYLSVEVRDTSGGVVFSYSRLGNEPMTHEHHKFEVFKDYTIHLFIQEPGQRLQLIVNKTLDTALPNSQNIYARLTATQLVVGEQSIIISDDNDFVPPPPRVNCGDQQIRVVETLKMIAF</sequence>
<reference key="1">
    <citation type="journal article" date="1995" name="J. Gen. Virol.">
        <title>Characterization of the Helicoverpa armigera and Pseudaletia unipuncta granulovirus enhancin genes.</title>
        <authorList>
            <person name="Roelvink P.W."/>
            <person name="Corsaro B.G."/>
            <person name="Granados R.R."/>
        </authorList>
    </citation>
    <scope>NUCLEOTIDE SEQUENCE [GENOMIC DNA]</scope>
</reference>
<protein>
    <recommendedName>
        <fullName>Viral-enhancing factor</fullName>
        <shortName>Enhancin</shortName>
        <shortName>VEF</shortName>
    </recommendedName>
    <alternativeName>
        <fullName>104 kDa glycoprotein</fullName>
    </alternativeName>
    <alternativeName>
        <fullName>Synergistic factor</fullName>
    </alternativeName>
</protein>
<keyword id="KW-0325">Glycoprotein</keyword>
<keyword id="KW-0426">Late protein</keyword>
<name>VEF_GVHA</name>
<gene>
    <name type="primary">VEF</name>
</gene>
<accession>P54232</accession>
<feature type="chain" id="PRO_0000132865" description="Viral-enhancing factor">
    <location>
        <begin position="1"/>
        <end position="902"/>
    </location>
</feature>
<feature type="domain" description="Peptidase M60" evidence="3">
    <location>
        <begin position="27"/>
        <end position="330"/>
    </location>
</feature>
<feature type="glycosylation site" description="N-linked (GlcNAc...) asparagine; by host" evidence="2">
    <location>
        <position position="73"/>
    </location>
</feature>
<feature type="glycosylation site" description="N-linked (GlcNAc...) asparagine; by host" evidence="2">
    <location>
        <position position="265"/>
    </location>
</feature>
<feature type="glycosylation site" description="N-linked (GlcNAc...) asparagine; by host" evidence="2">
    <location>
        <position position="278"/>
    </location>
</feature>
<feature type="glycosylation site" description="N-linked (GlcNAc...) asparagine; by host" evidence="2">
    <location>
        <position position="339"/>
    </location>
</feature>
<feature type="glycosylation site" description="N-linked (GlcNAc...) asparagine; by host" evidence="2">
    <location>
        <position position="540"/>
    </location>
</feature>
<feature type="glycosylation site" description="N-linked (GlcNAc...) asparagine; by host" evidence="2">
    <location>
        <position position="593"/>
    </location>
</feature>
<feature type="glycosylation site" description="N-linked (GlcNAc...) asparagine; by host" evidence="2">
    <location>
        <position position="594"/>
    </location>
</feature>
<feature type="glycosylation site" description="N-linked (GlcNAc...) asparagine; by host" evidence="2">
    <location>
        <position position="620"/>
    </location>
</feature>
<feature type="glycosylation site" description="N-linked (GlcNAc...) asparagine; by host" evidence="2">
    <location>
        <position position="782"/>
    </location>
</feature>
<feature type="glycosylation site" description="N-linked (GlcNAc...) asparagine; by host" evidence="2">
    <location>
        <position position="840"/>
    </location>
</feature>